<keyword id="KW-0002">3D-structure</keyword>
<keyword id="KW-0053">Apoptosis</keyword>
<keyword id="KW-0244">Early protein</keyword>
<keyword id="KW-0945">Host-virus interaction</keyword>
<keyword id="KW-1085">Inhibition of host caspases by virus</keyword>
<keyword id="KW-1090">Inhibition of host innate immune response by virus</keyword>
<keyword id="KW-1119">Modulation of host cell apoptosis by virus</keyword>
<keyword id="KW-0646">Protease inhibitor</keyword>
<keyword id="KW-1185">Reference proteome</keyword>
<keyword id="KW-0941">Suppressor of RNA silencing</keyword>
<keyword id="KW-0789">Thiol protease inhibitor</keyword>
<keyword id="KW-0899">Viral immunoevasion</keyword>
<comment type="function">
    <text evidence="1 2 3">Functions as an inhibitor of the host RNA interference antiviral response. Inhibits the insect host cell apoptotic response initiated by the viral infection. Blocks as well the activity of members of the caspase family of proteases. Required for late and very late gene expression.</text>
</comment>
<comment type="similarity">
    <text evidence="4">Belongs to the protease inhibitor I50 (p35) family.</text>
</comment>
<evidence type="ECO:0000269" key="1">
    <source>
    </source>
</evidence>
<evidence type="ECO:0000269" key="2">
    <source>
    </source>
</evidence>
<evidence type="ECO:0000269" key="3">
    <source>
    </source>
</evidence>
<evidence type="ECO:0000305" key="4"/>
<evidence type="ECO:0007829" key="5">
    <source>
        <dbReference type="PDB" id="1I3P"/>
    </source>
</evidence>
<evidence type="ECO:0007829" key="6">
    <source>
        <dbReference type="PDB" id="1I3S"/>
    </source>
</evidence>
<evidence type="ECO:0007829" key="7">
    <source>
        <dbReference type="PDB" id="1P35"/>
    </source>
</evidence>
<protein>
    <recommendedName>
        <fullName>Early 35 kDa protein</fullName>
    </recommendedName>
    <alternativeName>
        <fullName>Apoptosis-preventing protein</fullName>
    </alternativeName>
    <alternativeName>
        <fullName>p35</fullName>
    </alternativeName>
</protein>
<accession>P08160</accession>
<feature type="chain" id="PRO_0000132898" description="Early 35 kDa protein">
    <location>
        <begin position="1"/>
        <end position="299"/>
    </location>
</feature>
<feature type="strand" evidence="7">
    <location>
        <begin position="3"/>
        <end position="8"/>
    </location>
</feature>
<feature type="strand" evidence="7">
    <location>
        <begin position="11"/>
        <end position="22"/>
    </location>
</feature>
<feature type="strand" evidence="7">
    <location>
        <begin position="25"/>
        <end position="34"/>
    </location>
</feature>
<feature type="strand" evidence="5">
    <location>
        <begin position="40"/>
        <end position="42"/>
    </location>
</feature>
<feature type="strand" evidence="7">
    <location>
        <begin position="43"/>
        <end position="51"/>
    </location>
</feature>
<feature type="strand" evidence="7">
    <location>
        <begin position="53"/>
        <end position="56"/>
    </location>
</feature>
<feature type="helix" evidence="7">
    <location>
        <begin position="63"/>
        <end position="75"/>
    </location>
</feature>
<feature type="helix" evidence="7">
    <location>
        <begin position="76"/>
        <end position="78"/>
    </location>
</feature>
<feature type="strand" evidence="6">
    <location>
        <begin position="94"/>
        <end position="97"/>
    </location>
</feature>
<feature type="strand" evidence="7">
    <location>
        <begin position="102"/>
        <end position="107"/>
    </location>
</feature>
<feature type="helix" evidence="7">
    <location>
        <begin position="108"/>
        <end position="110"/>
    </location>
</feature>
<feature type="helix" evidence="7">
    <location>
        <begin position="111"/>
        <end position="121"/>
    </location>
</feature>
<feature type="helix" evidence="7">
    <location>
        <begin position="127"/>
        <end position="136"/>
    </location>
</feature>
<feature type="helix" evidence="7">
    <location>
        <begin position="138"/>
        <end position="141"/>
    </location>
</feature>
<feature type="strand" evidence="6">
    <location>
        <begin position="144"/>
        <end position="146"/>
    </location>
</feature>
<feature type="strand" evidence="7">
    <location>
        <begin position="148"/>
        <end position="155"/>
    </location>
</feature>
<feature type="turn" evidence="6">
    <location>
        <begin position="157"/>
        <end position="160"/>
    </location>
</feature>
<feature type="strand" evidence="6">
    <location>
        <begin position="161"/>
        <end position="163"/>
    </location>
</feature>
<feature type="strand" evidence="7">
    <location>
        <begin position="165"/>
        <end position="171"/>
    </location>
</feature>
<feature type="strand" evidence="7">
    <location>
        <begin position="177"/>
        <end position="180"/>
    </location>
</feature>
<feature type="strand" evidence="7">
    <location>
        <begin position="188"/>
        <end position="190"/>
    </location>
</feature>
<feature type="strand" evidence="7">
    <location>
        <begin position="192"/>
        <end position="200"/>
    </location>
</feature>
<feature type="helix" evidence="7">
    <location>
        <begin position="207"/>
        <end position="216"/>
    </location>
</feature>
<feature type="strand" evidence="7">
    <location>
        <begin position="228"/>
        <end position="235"/>
    </location>
</feature>
<feature type="strand" evidence="7">
    <location>
        <begin position="237"/>
        <end position="250"/>
    </location>
</feature>
<feature type="strand" evidence="7">
    <location>
        <begin position="253"/>
        <end position="257"/>
    </location>
</feature>
<feature type="strand" evidence="7">
    <location>
        <begin position="260"/>
        <end position="272"/>
    </location>
</feature>
<feature type="turn" evidence="7">
    <location>
        <begin position="273"/>
        <end position="276"/>
    </location>
</feature>
<feature type="strand" evidence="7">
    <location>
        <begin position="277"/>
        <end position="288"/>
    </location>
</feature>
<feature type="strand" evidence="7">
    <location>
        <begin position="293"/>
        <end position="297"/>
    </location>
</feature>
<proteinExistence type="evidence at protein level"/>
<organismHost>
    <name type="scientific">Lepidoptera</name>
    <name type="common">butterflies and moths</name>
    <dbReference type="NCBI Taxonomy" id="7088"/>
</organismHost>
<sequence>MCVIFPVEIDVSQTIIRDCQVDKQTRELVYINKIMNTQLTKPVLMMFNISGPIRSVTRKNNNLRDRIKSKVDEQFDQLERDYSDQMDGFHDSIKYFKDEHYSVSCQNGSVLKSKFAKILKSHDYTDKKSIEAYEKYCLPKLVDERNDYYVAVCVLKPGFENGSNQVLSFEYNPIGNKVIVPFAHEINDTGLYEYDVVAYVDSVQFDGEQFEEFVQSLILPSSFKNSEKVLYYNEASKNKSMIYKALEFTTESSWGKSEKYNWKIFCNGFIYDKKSKVLYVKLHNVTSALNKNVILNTIK</sequence>
<dbReference type="EMBL" id="M16821">
    <property type="protein sequence ID" value="AAA46703.1"/>
    <property type="molecule type" value="Genomic_DNA"/>
</dbReference>
<dbReference type="EMBL" id="L22858">
    <property type="protein sequence ID" value="AAA66765.1"/>
    <property type="molecule type" value="Genomic_DNA"/>
</dbReference>
<dbReference type="PIR" id="A27840">
    <property type="entry name" value="WMNV35"/>
</dbReference>
<dbReference type="PDB" id="1I3P">
    <property type="method" value="X-ray"/>
    <property type="resolution" value="3.10 A"/>
    <property type="chains" value="A=2-299"/>
</dbReference>
<dbReference type="PDB" id="1I3S">
    <property type="method" value="X-ray"/>
    <property type="resolution" value="2.70 A"/>
    <property type="chains" value="A/B/C=2-299"/>
</dbReference>
<dbReference type="PDB" id="1I4E">
    <property type="method" value="X-ray"/>
    <property type="resolution" value="3.00 A"/>
    <property type="chains" value="A=2-299"/>
</dbReference>
<dbReference type="PDB" id="1P35">
    <property type="method" value="X-ray"/>
    <property type="resolution" value="2.20 A"/>
    <property type="chains" value="A/B/C=2-299"/>
</dbReference>
<dbReference type="PDB" id="2FUN">
    <property type="method" value="X-ray"/>
    <property type="resolution" value="3.00 A"/>
    <property type="chains" value="A/C=2-299"/>
</dbReference>
<dbReference type="PDBsum" id="1I3P"/>
<dbReference type="PDBsum" id="1I3S"/>
<dbReference type="PDBsum" id="1I4E"/>
<dbReference type="PDBsum" id="1P35"/>
<dbReference type="PDBsum" id="2FUN"/>
<dbReference type="SMR" id="P08160"/>
<dbReference type="IntAct" id="P08160">
    <property type="interactions" value="1"/>
</dbReference>
<dbReference type="MINT" id="P08160"/>
<dbReference type="MEROPS" id="I50.001"/>
<dbReference type="KEGG" id="vg:1403968"/>
<dbReference type="OrthoDB" id="7149at10239"/>
<dbReference type="EvolutionaryTrace" id="P08160"/>
<dbReference type="Proteomes" id="UP000008292">
    <property type="component" value="Segment"/>
</dbReference>
<dbReference type="GO" id="GO:0004869">
    <property type="term" value="F:cysteine-type endopeptidase inhibitor activity"/>
    <property type="evidence" value="ECO:0007669"/>
    <property type="project" value="UniProtKB-KW"/>
</dbReference>
<dbReference type="GO" id="GO:0043027">
    <property type="term" value="F:cysteine-type endopeptidase inhibitor activity involved in apoptotic process"/>
    <property type="evidence" value="ECO:0007669"/>
    <property type="project" value="InterPro"/>
</dbReference>
<dbReference type="GO" id="GO:0043066">
    <property type="term" value="P:negative regulation of apoptotic process"/>
    <property type="evidence" value="ECO:0000315"/>
    <property type="project" value="CACAO"/>
</dbReference>
<dbReference type="GO" id="GO:0033668">
    <property type="term" value="P:symbiont-mediated suppression of host apoptosis"/>
    <property type="evidence" value="ECO:0000314"/>
    <property type="project" value="UniProtKB"/>
</dbReference>
<dbReference type="GO" id="GO:0140533">
    <property type="term" value="P:symbiont-mediated suppression of host RNAi-mediated antiviral immune response"/>
    <property type="evidence" value="ECO:0000314"/>
    <property type="project" value="UniProtKB"/>
</dbReference>
<dbReference type="FunFam" id="2.60.250.10:FF:000001">
    <property type="entry name" value="Early 35 kDa protein"/>
    <property type="match status" value="1"/>
</dbReference>
<dbReference type="Gene3D" id="2.60.250.10">
    <property type="entry name" value="Baculovirus p35"/>
    <property type="match status" value="1"/>
</dbReference>
<dbReference type="InterPro" id="IPR003429">
    <property type="entry name" value="Baculovirus_p35"/>
</dbReference>
<dbReference type="InterPro" id="IPR036562">
    <property type="entry name" value="Baculovirus_p35_sf"/>
</dbReference>
<dbReference type="Pfam" id="PF02331">
    <property type="entry name" value="P35"/>
    <property type="match status" value="1"/>
</dbReference>
<dbReference type="SUPFAM" id="SSF49894">
    <property type="entry name" value="Baculovirus p35 protein"/>
    <property type="match status" value="1"/>
</dbReference>
<name>P35_NPVAC</name>
<gene>
    <name type="primary">P35</name>
</gene>
<reference key="1">
    <citation type="journal article" date="1987" name="J. Virol.">
        <title>Divergent transcription of early 35- and 94-kilodalton protein genes encoded by the HindIII K genome fragment of the baculovirus Autographa californica nuclear polyhedrosis virus.</title>
        <authorList>
            <person name="Friesen P.D."/>
            <person name="Miller L.K."/>
        </authorList>
    </citation>
    <scope>NUCLEOTIDE SEQUENCE [GENOMIC DNA]</scope>
    <source>
        <strain>L1</strain>
    </source>
</reference>
<reference key="2">
    <citation type="journal article" date="1994" name="Virology">
        <title>The complete DNA sequence of Autographa californica nuclear polyhedrosis virus.</title>
        <authorList>
            <person name="Ayres M.D."/>
            <person name="Howard S.C."/>
            <person name="Kuzio J."/>
            <person name="Lopez-Ferber M."/>
            <person name="Possee R.D."/>
        </authorList>
    </citation>
    <scope>NUCLEOTIDE SEQUENCE [LARGE SCALE GENOMIC DNA]</scope>
    <source>
        <strain>C6</strain>
    </source>
</reference>
<reference key="3">
    <citation type="journal article" date="1991" name="Science">
        <title>Prevention of apoptosis by a baculovirus gene during infection of insect cells.</title>
        <authorList>
            <person name="Clem R.J."/>
            <person name="Fechheimer M."/>
            <person name="Miller L.K."/>
        </authorList>
    </citation>
    <scope>FUNCTION</scope>
</reference>
<reference key="4">
    <citation type="journal article" date="2005" name="Res. Microbiol.">
        <title>In vivo apoptosis induction and reduction of infectivity by an Autographa californica multiple nucleopolyhedrovirus p35(-) recombinant in hemocytes from the velvet bean caterpillar Anticarsia gemmatalis (Huebner) (Lepidoptera: Noctuidae).</title>
        <authorList>
            <person name="da Silveira E.B."/>
            <person name="Cordeiro B.A."/>
            <person name="Ribeiro B.M."/>
            <person name="Bao S.N."/>
        </authorList>
    </citation>
    <scope>FUNCTION</scope>
</reference>
<reference key="5">
    <citation type="journal article" date="2015" name="J. Virol.">
        <title>The Baculovirus antiapoptotic p35 protein functions as an inhibitor of the host RNA interference antiviral response.</title>
        <authorList>
            <person name="Mehrabadi M."/>
            <person name="Hussain M."/>
            <person name="Matindoost L."/>
            <person name="Asgari S."/>
        </authorList>
    </citation>
    <scope>FUNCTION</scope>
</reference>
<organism>
    <name type="scientific">Autographa californica nuclear polyhedrosis virus</name>
    <name type="common">AcMNPV</name>
    <dbReference type="NCBI Taxonomy" id="46015"/>
    <lineage>
        <taxon>Viruses</taxon>
        <taxon>Viruses incertae sedis</taxon>
        <taxon>Naldaviricetes</taxon>
        <taxon>Lefavirales</taxon>
        <taxon>Baculoviridae</taxon>
        <taxon>Alphabaculovirus</taxon>
        <taxon>Alphabaculovirus aucalifornicae</taxon>
    </lineage>
</organism>